<organism>
    <name type="scientific">Danio rerio</name>
    <name type="common">Zebrafish</name>
    <name type="synonym">Brachydanio rerio</name>
    <dbReference type="NCBI Taxonomy" id="7955"/>
    <lineage>
        <taxon>Eukaryota</taxon>
        <taxon>Metazoa</taxon>
        <taxon>Chordata</taxon>
        <taxon>Craniata</taxon>
        <taxon>Vertebrata</taxon>
        <taxon>Euteleostomi</taxon>
        <taxon>Actinopterygii</taxon>
        <taxon>Neopterygii</taxon>
        <taxon>Teleostei</taxon>
        <taxon>Ostariophysi</taxon>
        <taxon>Cypriniformes</taxon>
        <taxon>Danionidae</taxon>
        <taxon>Danioninae</taxon>
        <taxon>Danio</taxon>
    </lineage>
</organism>
<protein>
    <recommendedName>
        <fullName>Izumo sperm-egg fusion protein 1</fullName>
    </recommendedName>
</protein>
<sequence length="336" mass="38604">MTLPILLGWFLTLCSSHIVRSCLQCDQVIRYVHEDFLSTVKGIRVRDQIELKKIIDHAYTNYRETSKLLSGVIDPTTLYRARTEYQSEFKRHWKEDRTNSLQWDLITIVEKGKRILQKHLEIFIAEGLCPNKCGLLYQRVMNCTSCQYGLFTCLSAKPPLDCGEHHLEADEGEEVVLDCFLSWHTLVVGQTEYHYSWHPGETNVLFDGEYEELVVTKESKIVLNQLSVSEEGSYRCLLKDQKGTALSRTFFQLEVKPFPSTSPRQVVTLPSLPLGYENTPYSLQKSSFLTVLILLTVLSITGSLIIIEYLRKSLKRQEEARGRDSRTAGDIELNTE</sequence>
<evidence type="ECO:0000250" key="1">
    <source>
        <dbReference type="UniProtKB" id="Q8IYV9"/>
    </source>
</evidence>
<evidence type="ECO:0000250" key="2">
    <source>
        <dbReference type="UniProtKB" id="Q9D9J7"/>
    </source>
</evidence>
<evidence type="ECO:0000255" key="3"/>
<evidence type="ECO:0000255" key="4">
    <source>
        <dbReference type="PROSITE-ProRule" id="PRU00114"/>
    </source>
</evidence>
<evidence type="ECO:0000269" key="5">
    <source>
    </source>
</evidence>
<evidence type="ECO:0000305" key="6"/>
<evidence type="ECO:0000312" key="7">
    <source>
        <dbReference type="Proteomes" id="UP000000437"/>
    </source>
</evidence>
<evidence type="ECO:0000312" key="8">
    <source>
        <dbReference type="RefSeq" id="NP_001314727.1"/>
    </source>
</evidence>
<name>IZUM1_DANRE</name>
<dbReference type="EMBL" id="FQ311923">
    <property type="status" value="NOT_ANNOTATED_CDS"/>
    <property type="molecule type" value="Genomic_DNA"/>
</dbReference>
<dbReference type="RefSeq" id="NP_001314727.1">
    <property type="nucleotide sequence ID" value="NM_001327798.1"/>
</dbReference>
<dbReference type="SMR" id="A0A2R8QHQ6"/>
<dbReference type="FunCoup" id="A0A2R8QHQ6">
    <property type="interactions" value="11"/>
</dbReference>
<dbReference type="GeneID" id="100329365"/>
<dbReference type="KEGG" id="dre:100329365"/>
<dbReference type="CTD" id="284359"/>
<dbReference type="OMA" id="ATIINFH"/>
<dbReference type="OrthoDB" id="9907157at2759"/>
<dbReference type="Proteomes" id="UP000000437">
    <property type="component" value="Chromosome 8"/>
</dbReference>
<dbReference type="Bgee" id="ENSDARG00000116848">
    <property type="expression patterns" value="Expressed in testis and 4 other cell types or tissues"/>
</dbReference>
<dbReference type="GO" id="GO:0002080">
    <property type="term" value="C:acrosomal membrane"/>
    <property type="evidence" value="ECO:0000318"/>
    <property type="project" value="GO_Central"/>
</dbReference>
<dbReference type="GO" id="GO:0005886">
    <property type="term" value="C:plasma membrane"/>
    <property type="evidence" value="ECO:0000318"/>
    <property type="project" value="GO_Central"/>
</dbReference>
<dbReference type="GO" id="GO:0086080">
    <property type="term" value="F:protein binding involved in heterotypic cell-cell adhesion"/>
    <property type="evidence" value="ECO:0000318"/>
    <property type="project" value="GO_Central"/>
</dbReference>
<dbReference type="GO" id="GO:0005102">
    <property type="term" value="F:signaling receptor binding"/>
    <property type="evidence" value="ECO:0000318"/>
    <property type="project" value="GO_Central"/>
</dbReference>
<dbReference type="GO" id="GO:0007342">
    <property type="term" value="P:fusion of sperm to egg plasma membrane involved in single fertilization"/>
    <property type="evidence" value="ECO:0000318"/>
    <property type="project" value="GO_Central"/>
</dbReference>
<dbReference type="GO" id="GO:0034113">
    <property type="term" value="P:heterotypic cell-cell adhesion"/>
    <property type="evidence" value="ECO:0000318"/>
    <property type="project" value="GO_Central"/>
</dbReference>
<dbReference type="GO" id="GO:0035036">
    <property type="term" value="P:sperm-egg recognition"/>
    <property type="evidence" value="ECO:0000314"/>
    <property type="project" value="UniProtKB"/>
</dbReference>
<dbReference type="CDD" id="cd00096">
    <property type="entry name" value="Ig"/>
    <property type="match status" value="1"/>
</dbReference>
<dbReference type="Gene3D" id="2.60.40.10">
    <property type="entry name" value="Immunoglobulins"/>
    <property type="match status" value="1"/>
</dbReference>
<dbReference type="InterPro" id="IPR007110">
    <property type="entry name" value="Ig-like_dom"/>
</dbReference>
<dbReference type="InterPro" id="IPR036179">
    <property type="entry name" value="Ig-like_dom_sf"/>
</dbReference>
<dbReference type="InterPro" id="IPR013783">
    <property type="entry name" value="Ig-like_fold"/>
</dbReference>
<dbReference type="InterPro" id="IPR003599">
    <property type="entry name" value="Ig_sub"/>
</dbReference>
<dbReference type="InterPro" id="IPR029389">
    <property type="entry name" value="IZUMO"/>
</dbReference>
<dbReference type="InterPro" id="IPR032699">
    <property type="entry name" value="Izumo-Ig"/>
</dbReference>
<dbReference type="InterPro" id="IPR032700">
    <property type="entry name" value="IZUMO1"/>
</dbReference>
<dbReference type="PANTHER" id="PTHR35540">
    <property type="entry name" value="IZUMO SPERM-EGG FUSION PROTEIN 1"/>
    <property type="match status" value="1"/>
</dbReference>
<dbReference type="PANTHER" id="PTHR35540:SF1">
    <property type="entry name" value="IZUMO SPERM-EGG FUSION PROTEIN 1"/>
    <property type="match status" value="1"/>
</dbReference>
<dbReference type="Pfam" id="PF15005">
    <property type="entry name" value="IZUMO"/>
    <property type="match status" value="1"/>
</dbReference>
<dbReference type="Pfam" id="PF16706">
    <property type="entry name" value="Izumo-Ig"/>
    <property type="match status" value="1"/>
</dbReference>
<dbReference type="SMART" id="SM00409">
    <property type="entry name" value="IG"/>
    <property type="match status" value="1"/>
</dbReference>
<dbReference type="SUPFAM" id="SSF48726">
    <property type="entry name" value="Immunoglobulin"/>
    <property type="match status" value="1"/>
</dbReference>
<dbReference type="PROSITE" id="PS50835">
    <property type="entry name" value="IG_LIKE"/>
    <property type="match status" value="1"/>
</dbReference>
<feature type="signal peptide" evidence="3">
    <location>
        <begin position="1"/>
        <end position="16"/>
    </location>
</feature>
<feature type="chain" id="PRO_5035035407" description="Izumo sperm-egg fusion protein 1" evidence="3">
    <location>
        <begin position="17"/>
        <end position="336"/>
    </location>
</feature>
<feature type="transmembrane region" description="Helical" evidence="3">
    <location>
        <begin position="287"/>
        <end position="307"/>
    </location>
</feature>
<feature type="domain" description="Ig-like C2-type" evidence="4">
    <location>
        <begin position="158"/>
        <end position="247"/>
    </location>
</feature>
<feature type="disulfide bond" evidence="4">
    <location>
        <begin position="179"/>
        <end position="236"/>
    </location>
</feature>
<feature type="mutagenesis site" description="Loss of interaction with bncr." evidence="5">
    <original>W</original>
    <variation>A</variation>
    <location>
        <position position="103"/>
    </location>
</feature>
<feature type="mutagenesis site" description="Loss of interaction with bncr." evidence="5">
    <original>K</original>
    <variation>E</variation>
    <location>
        <position position="111"/>
    </location>
</feature>
<reference evidence="7" key="1">
    <citation type="journal article" date="2013" name="Nature">
        <title>The zebrafish reference genome sequence and its relationship to the human genome.</title>
        <authorList>
            <person name="Howe K."/>
            <person name="Clark M.D."/>
            <person name="Torroja C.F."/>
            <person name="Torrance J."/>
            <person name="Berthelot C."/>
            <person name="Muffato M."/>
            <person name="Collins J.E."/>
            <person name="Humphray S."/>
            <person name="McLaren K."/>
            <person name="Matthews L."/>
            <person name="McLaren S."/>
            <person name="Sealy I."/>
            <person name="Caccamo M."/>
            <person name="Churcher C."/>
            <person name="Scott C."/>
            <person name="Barrett J.C."/>
            <person name="Koch R."/>
            <person name="Rauch G.J."/>
            <person name="White S."/>
            <person name="Chow W."/>
            <person name="Kilian B."/>
            <person name="Quintais L.T."/>
            <person name="Guerra-Assuncao J.A."/>
            <person name="Zhou Y."/>
            <person name="Gu Y."/>
            <person name="Yen J."/>
            <person name="Vogel J.H."/>
            <person name="Eyre T."/>
            <person name="Redmond S."/>
            <person name="Banerjee R."/>
            <person name="Chi J."/>
            <person name="Fu B."/>
            <person name="Langley E."/>
            <person name="Maguire S.F."/>
            <person name="Laird G.K."/>
            <person name="Lloyd D."/>
            <person name="Kenyon E."/>
            <person name="Donaldson S."/>
            <person name="Sehra H."/>
            <person name="Almeida-King J."/>
            <person name="Loveland J."/>
            <person name="Trevanion S."/>
            <person name="Jones M."/>
            <person name="Quail M."/>
            <person name="Willey D."/>
            <person name="Hunt A."/>
            <person name="Burton J."/>
            <person name="Sims S."/>
            <person name="McLay K."/>
            <person name="Plumb B."/>
            <person name="Davis J."/>
            <person name="Clee C."/>
            <person name="Oliver K."/>
            <person name="Clark R."/>
            <person name="Riddle C."/>
            <person name="Elliot D."/>
            <person name="Threadgold G."/>
            <person name="Harden G."/>
            <person name="Ware D."/>
            <person name="Begum S."/>
            <person name="Mortimore B."/>
            <person name="Kerry G."/>
            <person name="Heath P."/>
            <person name="Phillimore B."/>
            <person name="Tracey A."/>
            <person name="Corby N."/>
            <person name="Dunn M."/>
            <person name="Johnson C."/>
            <person name="Wood J."/>
            <person name="Clark S."/>
            <person name="Pelan S."/>
            <person name="Griffiths G."/>
            <person name="Smith M."/>
            <person name="Glithero R."/>
            <person name="Howden P."/>
            <person name="Barker N."/>
            <person name="Lloyd C."/>
            <person name="Stevens C."/>
            <person name="Harley J."/>
            <person name="Holt K."/>
            <person name="Panagiotidis G."/>
            <person name="Lovell J."/>
            <person name="Beasley H."/>
            <person name="Henderson C."/>
            <person name="Gordon D."/>
            <person name="Auger K."/>
            <person name="Wright D."/>
            <person name="Collins J."/>
            <person name="Raisen C."/>
            <person name="Dyer L."/>
            <person name="Leung K."/>
            <person name="Robertson L."/>
            <person name="Ambridge K."/>
            <person name="Leongamornlert D."/>
            <person name="McGuire S."/>
            <person name="Gilderthorp R."/>
            <person name="Griffiths C."/>
            <person name="Manthravadi D."/>
            <person name="Nichol S."/>
            <person name="Barker G."/>
            <person name="Whitehead S."/>
            <person name="Kay M."/>
            <person name="Brown J."/>
            <person name="Murnane C."/>
            <person name="Gray E."/>
            <person name="Humphries M."/>
            <person name="Sycamore N."/>
            <person name="Barker D."/>
            <person name="Saunders D."/>
            <person name="Wallis J."/>
            <person name="Babbage A."/>
            <person name="Hammond S."/>
            <person name="Mashreghi-Mohammadi M."/>
            <person name="Barr L."/>
            <person name="Martin S."/>
            <person name="Wray P."/>
            <person name="Ellington A."/>
            <person name="Matthews N."/>
            <person name="Ellwood M."/>
            <person name="Woodmansey R."/>
            <person name="Clark G."/>
            <person name="Cooper J."/>
            <person name="Tromans A."/>
            <person name="Grafham D."/>
            <person name="Skuce C."/>
            <person name="Pandian R."/>
            <person name="Andrews R."/>
            <person name="Harrison E."/>
            <person name="Kimberley A."/>
            <person name="Garnett J."/>
            <person name="Fosker N."/>
            <person name="Hall R."/>
            <person name="Garner P."/>
            <person name="Kelly D."/>
            <person name="Bird C."/>
            <person name="Palmer S."/>
            <person name="Gehring I."/>
            <person name="Berger A."/>
            <person name="Dooley C.M."/>
            <person name="Ersan-Urun Z."/>
            <person name="Eser C."/>
            <person name="Geiger H."/>
            <person name="Geisler M."/>
            <person name="Karotki L."/>
            <person name="Kirn A."/>
            <person name="Konantz J."/>
            <person name="Konantz M."/>
            <person name="Oberlander M."/>
            <person name="Rudolph-Geiger S."/>
            <person name="Teucke M."/>
            <person name="Lanz C."/>
            <person name="Raddatz G."/>
            <person name="Osoegawa K."/>
            <person name="Zhu B."/>
            <person name="Rapp A."/>
            <person name="Widaa S."/>
            <person name="Langford C."/>
            <person name="Yang F."/>
            <person name="Schuster S.C."/>
            <person name="Carter N.P."/>
            <person name="Harrow J."/>
            <person name="Ning Z."/>
            <person name="Herrero J."/>
            <person name="Searle S.M."/>
            <person name="Enright A."/>
            <person name="Geisler R."/>
            <person name="Plasterk R.H."/>
            <person name="Lee C."/>
            <person name="Westerfield M."/>
            <person name="de Jong P.J."/>
            <person name="Zon L.I."/>
            <person name="Postlethwait J.H."/>
            <person name="Nusslein-Volhard C."/>
            <person name="Hubbard T.J."/>
            <person name="Roest Crollius H."/>
            <person name="Rogers J."/>
            <person name="Stemple D.L."/>
        </authorList>
    </citation>
    <scope>NUCLEOTIDE SEQUENCE [LARGE SCALE GENOMIC DNA]</scope>
    <source>
        <strain>Tuebingen</strain>
    </source>
</reference>
<reference key="2">
    <citation type="journal article" date="2024" name="Cell">
        <title>A conserved fertilization complex bridges sperm and egg in vertebrates.</title>
        <authorList>
            <person name="Deneke V.E."/>
            <person name="Blaha A."/>
            <person name="Lu Y."/>
            <person name="Suwita J.P."/>
            <person name="Draper J.M."/>
            <person name="Phan C.S."/>
            <person name="Panser K."/>
            <person name="Schleiffer A."/>
            <person name="Jacob L."/>
            <person name="Humer T."/>
            <person name="Stejskal K."/>
            <person name="Krssakova G."/>
            <person name="Roitinger E."/>
            <person name="Handler D."/>
            <person name="Kamoshita M."/>
            <person name="Vance T.D.R."/>
            <person name="Wang X."/>
            <person name="Surm J.M."/>
            <person name="Moran Y."/>
            <person name="Lee J.E."/>
            <person name="Ikawa M."/>
            <person name="Pauli A."/>
        </authorList>
    </citation>
    <scope>FUNCTION</scope>
    <scope>TISSUE SPECIFICITY</scope>
    <scope>INTERACTION WITH BNCR; TMEMT81 AND SPACA6</scope>
    <scope>SUBCELLULAR LOCATION</scope>
    <scope>MUTAGENESIS OF TRP-103 AND LYS-111</scope>
</reference>
<keyword id="KW-1003">Cell membrane</keyword>
<keyword id="KW-0968">Cytoplasmic vesicle</keyword>
<keyword id="KW-1015">Disulfide bond</keyword>
<keyword id="KW-0278">Fertilization</keyword>
<keyword id="KW-0393">Immunoglobulin domain</keyword>
<keyword id="KW-0472">Membrane</keyword>
<keyword id="KW-1185">Reference proteome</keyword>
<keyword id="KW-0732">Signal</keyword>
<keyword id="KW-0812">Transmembrane</keyword>
<keyword id="KW-1133">Transmembrane helix</keyword>
<proteinExistence type="evidence at protein level"/>
<accession>A0A2R8QHQ6</accession>
<accession>A0A8M1P314</accession>
<gene>
    <name evidence="8" type="primary">izumo1</name>
</gene>
<comment type="function">
    <text evidence="1 2">Essential sperm cell-surface protein required for fertilization by acting as a ligand for bncr receptor on egg. The interaction of the complex izumo1:spaca6:tmemt81 with bncr is a necessary adhesion event between sperm and egg that is required for fertilization.</text>
</comment>
<comment type="subunit">
    <text evidence="5">Forms a complex with tmem81 and spaca6 on spermatocyte cell membrane. The complex binds to oocyte protein bncr.</text>
</comment>
<comment type="subcellular location">
    <subcellularLocation>
        <location evidence="5">Cell membrane</location>
        <topology evidence="3">Single-pass type I membrane protein</topology>
    </subcellularLocation>
    <subcellularLocation>
        <location evidence="1">Cytoplasmic vesicle</location>
        <location evidence="1">Secretory vesicle</location>
        <location evidence="1">Acrosome membrane</location>
        <topology evidence="3">Single-pass type I membrane protein</topology>
    </subcellularLocation>
    <text evidence="1">Localizes initially to the acrosome membrane of the sperm head (both outer and inner acrosomal membranes). During the acrosome reaction, translocates to the plasma membrane.</text>
</comment>
<comment type="tissue specificity">
    <text evidence="5">Expressed in sperm.</text>
</comment>
<comment type="miscellaneous">
    <text evidence="1">Izumo is the name of a Japanese shrine to marriage.</text>
</comment>
<comment type="similarity">
    <text evidence="6">Belongs to the Izumo family.</text>
</comment>